<proteinExistence type="evidence at transcript level"/>
<name>FB142_ARATH</name>
<accession>Q9LRW6</accession>
<dbReference type="EMBL" id="AB028610">
    <property type="protein sequence ID" value="BAB02905.1"/>
    <property type="molecule type" value="Genomic_DNA"/>
</dbReference>
<dbReference type="EMBL" id="CP002686">
    <property type="protein sequence ID" value="AEE75421.1"/>
    <property type="molecule type" value="Genomic_DNA"/>
</dbReference>
<dbReference type="EMBL" id="DQ446660">
    <property type="protein sequence ID" value="ABE65938.1"/>
    <property type="molecule type" value="mRNA"/>
</dbReference>
<dbReference type="RefSeq" id="NP_187998.1">
    <property type="nucleotide sequence ID" value="NM_112235.2"/>
</dbReference>
<dbReference type="BioGRID" id="5928">
    <property type="interactions" value="6"/>
</dbReference>
<dbReference type="FunCoup" id="Q9LRW6">
    <property type="interactions" value="1"/>
</dbReference>
<dbReference type="STRING" id="3702.Q9LRW6"/>
<dbReference type="PaxDb" id="3702-AT3G13820.1"/>
<dbReference type="ProteomicsDB" id="222455"/>
<dbReference type="EnsemblPlants" id="AT3G13820.1">
    <property type="protein sequence ID" value="AT3G13820.1"/>
    <property type="gene ID" value="AT3G13820"/>
</dbReference>
<dbReference type="GeneID" id="820594"/>
<dbReference type="Gramene" id="AT3G13820.1">
    <property type="protein sequence ID" value="AT3G13820.1"/>
    <property type="gene ID" value="AT3G13820"/>
</dbReference>
<dbReference type="KEGG" id="ath:AT3G13820"/>
<dbReference type="Araport" id="AT3G13820"/>
<dbReference type="TAIR" id="AT3G13820"/>
<dbReference type="HOGENOM" id="CLU_034692_0_0_1"/>
<dbReference type="InParanoid" id="Q9LRW6"/>
<dbReference type="OMA" id="TCKKWNN"/>
<dbReference type="PhylomeDB" id="Q9LRW6"/>
<dbReference type="PRO" id="PR:Q9LRW6"/>
<dbReference type="Proteomes" id="UP000006548">
    <property type="component" value="Chromosome 3"/>
</dbReference>
<dbReference type="ExpressionAtlas" id="Q9LRW6">
    <property type="expression patterns" value="baseline and differential"/>
</dbReference>
<dbReference type="CDD" id="cd22157">
    <property type="entry name" value="F-box_AtFBW1-like"/>
    <property type="match status" value="1"/>
</dbReference>
<dbReference type="Gene3D" id="1.20.1280.50">
    <property type="match status" value="1"/>
</dbReference>
<dbReference type="InterPro" id="IPR006527">
    <property type="entry name" value="F-box-assoc_dom_typ1"/>
</dbReference>
<dbReference type="InterPro" id="IPR017451">
    <property type="entry name" value="F-box-assoc_interact_dom"/>
</dbReference>
<dbReference type="InterPro" id="IPR036047">
    <property type="entry name" value="F-box-like_dom_sf"/>
</dbReference>
<dbReference type="InterPro" id="IPR001810">
    <property type="entry name" value="F-box_dom"/>
</dbReference>
<dbReference type="InterPro" id="IPR050796">
    <property type="entry name" value="SCF_F-box_component"/>
</dbReference>
<dbReference type="NCBIfam" id="TIGR01640">
    <property type="entry name" value="F_box_assoc_1"/>
    <property type="match status" value="2"/>
</dbReference>
<dbReference type="PANTHER" id="PTHR31672">
    <property type="entry name" value="BNACNNG10540D PROTEIN"/>
    <property type="match status" value="1"/>
</dbReference>
<dbReference type="PANTHER" id="PTHR31672:SF13">
    <property type="entry name" value="F-BOX PROTEIN CPR30-LIKE"/>
    <property type="match status" value="1"/>
</dbReference>
<dbReference type="Pfam" id="PF00646">
    <property type="entry name" value="F-box"/>
    <property type="match status" value="1"/>
</dbReference>
<dbReference type="Pfam" id="PF07734">
    <property type="entry name" value="FBA_1"/>
    <property type="match status" value="1"/>
</dbReference>
<dbReference type="SMART" id="SM00256">
    <property type="entry name" value="FBOX"/>
    <property type="match status" value="1"/>
</dbReference>
<dbReference type="SUPFAM" id="SSF81383">
    <property type="entry name" value="F-box domain"/>
    <property type="match status" value="1"/>
</dbReference>
<dbReference type="PROSITE" id="PS50181">
    <property type="entry name" value="FBOX"/>
    <property type="match status" value="1"/>
</dbReference>
<sequence length="415" mass="47623">MTTMSNLPAEVLEEILSRTPVTSLRTMRSTCKKWNNLSKKKIIPEAARKQQGLMLIKKKICSLSFSLHEIHKDDYVVPCINQVDIPRNIEVEKIFHCDGILLCVIEDNCSLLVWNPYLGQTRRIEVSSDADMNDRYALGYDNNNSSHKILRIKKDFKNSDGLGYEIYRFASNSWSLLDEEVMKPEWDVWSVQRSSVSLKGNTYFLLQGNDYDDQEDEEEEDDEEYEDDDDVLPKDNFLLCFDYTTERFGPRLLLPFNPHVEETVALSCIGEERLVMLYQSFKTYKGIEIWVTDKIDPKAVSWSKFLKVDITPLTGFPVDFYADSFVIDEEKKVAAVFDIHCSYQKAHIIGEDGYLKCVNMGRASDVGNGQPLVFSSYVPSLVKVPVKQPKGKRKGRSSETKSNKNKKGRKIKIIG</sequence>
<protein>
    <recommendedName>
        <fullName>F-box protein At3g13820</fullName>
    </recommendedName>
</protein>
<feature type="chain" id="PRO_0000283412" description="F-box protein At3g13820">
    <location>
        <begin position="1"/>
        <end position="415"/>
    </location>
</feature>
<feature type="domain" description="F-box" evidence="1">
    <location>
        <begin position="1"/>
        <end position="50"/>
    </location>
</feature>
<feature type="region of interest" description="Disordered" evidence="2">
    <location>
        <begin position="209"/>
        <end position="229"/>
    </location>
</feature>
<feature type="region of interest" description="Disordered" evidence="2">
    <location>
        <begin position="387"/>
        <end position="415"/>
    </location>
</feature>
<feature type="compositionally biased region" description="Acidic residues" evidence="2">
    <location>
        <begin position="210"/>
        <end position="229"/>
    </location>
</feature>
<feature type="compositionally biased region" description="Basic residues" evidence="2">
    <location>
        <begin position="403"/>
        <end position="415"/>
    </location>
</feature>
<organism>
    <name type="scientific">Arabidopsis thaliana</name>
    <name type="common">Mouse-ear cress</name>
    <dbReference type="NCBI Taxonomy" id="3702"/>
    <lineage>
        <taxon>Eukaryota</taxon>
        <taxon>Viridiplantae</taxon>
        <taxon>Streptophyta</taxon>
        <taxon>Embryophyta</taxon>
        <taxon>Tracheophyta</taxon>
        <taxon>Spermatophyta</taxon>
        <taxon>Magnoliopsida</taxon>
        <taxon>eudicotyledons</taxon>
        <taxon>Gunneridae</taxon>
        <taxon>Pentapetalae</taxon>
        <taxon>rosids</taxon>
        <taxon>malvids</taxon>
        <taxon>Brassicales</taxon>
        <taxon>Brassicaceae</taxon>
        <taxon>Camelineae</taxon>
        <taxon>Arabidopsis</taxon>
    </lineage>
</organism>
<evidence type="ECO:0000255" key="1">
    <source>
        <dbReference type="PROSITE-ProRule" id="PRU00080"/>
    </source>
</evidence>
<evidence type="ECO:0000256" key="2">
    <source>
        <dbReference type="SAM" id="MobiDB-lite"/>
    </source>
</evidence>
<reference key="1">
    <citation type="journal article" date="2000" name="DNA Res.">
        <title>Structural analysis of Arabidopsis thaliana chromosome 3. I. Sequence features of the regions of 4,504,864 bp covered by sixty P1 and TAC clones.</title>
        <authorList>
            <person name="Sato S."/>
            <person name="Nakamura Y."/>
            <person name="Kaneko T."/>
            <person name="Katoh T."/>
            <person name="Asamizu E."/>
            <person name="Tabata S."/>
        </authorList>
    </citation>
    <scope>NUCLEOTIDE SEQUENCE [LARGE SCALE GENOMIC DNA]</scope>
    <source>
        <strain>cv. Columbia</strain>
    </source>
</reference>
<reference key="2">
    <citation type="journal article" date="2017" name="Plant J.">
        <title>Araport11: a complete reannotation of the Arabidopsis thaliana reference genome.</title>
        <authorList>
            <person name="Cheng C.Y."/>
            <person name="Krishnakumar V."/>
            <person name="Chan A.P."/>
            <person name="Thibaud-Nissen F."/>
            <person name="Schobel S."/>
            <person name="Town C.D."/>
        </authorList>
    </citation>
    <scope>GENOME REANNOTATION</scope>
    <source>
        <strain>cv. Columbia</strain>
    </source>
</reference>
<reference key="3">
    <citation type="journal article" date="2006" name="Plant Biotechnol. J.">
        <title>Simultaneous high-throughput recombinational cloning of open reading frames in closed and open configurations.</title>
        <authorList>
            <person name="Underwood B.A."/>
            <person name="Vanderhaeghen R."/>
            <person name="Whitford R."/>
            <person name="Town C.D."/>
            <person name="Hilson P."/>
        </authorList>
    </citation>
    <scope>NUCLEOTIDE SEQUENCE [LARGE SCALE MRNA]</scope>
    <source>
        <strain>cv. Columbia</strain>
    </source>
</reference>
<gene>
    <name type="ordered locus">At3g13820</name>
    <name type="ORF">MCP4.3</name>
</gene>
<keyword id="KW-1185">Reference proteome</keyword>